<dbReference type="EMBL" id="L43967">
    <property type="protein sequence ID" value="AAC71490.1"/>
    <property type="molecule type" value="Genomic_DNA"/>
</dbReference>
<dbReference type="PIR" id="F64229">
    <property type="entry name" value="F64229"/>
</dbReference>
<dbReference type="RefSeq" id="WP_009885899.1">
    <property type="nucleotide sequence ID" value="NC_000908.2"/>
</dbReference>
<dbReference type="SMR" id="P47510"/>
<dbReference type="FunCoup" id="P47510">
    <property type="interactions" value="152"/>
</dbReference>
<dbReference type="STRING" id="243273.MG_268"/>
<dbReference type="GeneID" id="88282423"/>
<dbReference type="KEGG" id="mge:MG_268"/>
<dbReference type="eggNOG" id="COG1428">
    <property type="taxonomic scope" value="Bacteria"/>
</dbReference>
<dbReference type="HOGENOM" id="CLU_110684_0_0_14"/>
<dbReference type="InParanoid" id="P47510"/>
<dbReference type="OrthoDB" id="391791at2"/>
<dbReference type="BioCyc" id="MGEN243273:G1GJ2-324-MONOMER"/>
<dbReference type="Proteomes" id="UP000000807">
    <property type="component" value="Chromosome"/>
</dbReference>
<dbReference type="GO" id="GO:0005737">
    <property type="term" value="C:cytoplasm"/>
    <property type="evidence" value="ECO:0000318"/>
    <property type="project" value="GO_Central"/>
</dbReference>
<dbReference type="GO" id="GO:0005524">
    <property type="term" value="F:ATP binding"/>
    <property type="evidence" value="ECO:0007669"/>
    <property type="project" value="UniProtKB-KW"/>
</dbReference>
<dbReference type="GO" id="GO:0019136">
    <property type="term" value="F:deoxynucleoside kinase activity"/>
    <property type="evidence" value="ECO:0000318"/>
    <property type="project" value="GO_Central"/>
</dbReference>
<dbReference type="CDD" id="cd01673">
    <property type="entry name" value="dNK"/>
    <property type="match status" value="1"/>
</dbReference>
<dbReference type="Gene3D" id="3.40.50.300">
    <property type="entry name" value="P-loop containing nucleotide triphosphate hydrolases"/>
    <property type="match status" value="1"/>
</dbReference>
<dbReference type="InterPro" id="IPR002624">
    <property type="entry name" value="DCK/DGK"/>
</dbReference>
<dbReference type="InterPro" id="IPR050566">
    <property type="entry name" value="Deoxyribonucleoside_kinase"/>
</dbReference>
<dbReference type="InterPro" id="IPR031314">
    <property type="entry name" value="DNK_dom"/>
</dbReference>
<dbReference type="InterPro" id="IPR027417">
    <property type="entry name" value="P-loop_NTPase"/>
</dbReference>
<dbReference type="PANTHER" id="PTHR10513:SF35">
    <property type="entry name" value="DEOXYADENOSINE KINASE"/>
    <property type="match status" value="1"/>
</dbReference>
<dbReference type="PANTHER" id="PTHR10513">
    <property type="entry name" value="DEOXYNUCLEOSIDE KINASE"/>
    <property type="match status" value="1"/>
</dbReference>
<dbReference type="Pfam" id="PF01712">
    <property type="entry name" value="dNK"/>
    <property type="match status" value="1"/>
</dbReference>
<dbReference type="PIRSF" id="PIRSF000705">
    <property type="entry name" value="DNK"/>
    <property type="match status" value="1"/>
</dbReference>
<dbReference type="SUPFAM" id="SSF52540">
    <property type="entry name" value="P-loop containing nucleoside triphosphate hydrolases"/>
    <property type="match status" value="1"/>
</dbReference>
<name>Y268_MYCGE</name>
<keyword id="KW-0067">ATP-binding</keyword>
<keyword id="KW-0547">Nucleotide-binding</keyword>
<keyword id="KW-1185">Reference proteome</keyword>
<sequence length="228" mass="26892">MQLKKPHFQPNKIANCIVIGGMIALGKTTIANTLANHIQAAKVVCELETNDQLVELLLAKMYERSDELLYSPLFQLYFTLNRFGKYQNNCNTINPTIFDRSIFEDWLFAKHNIIRPAVFSYYNQLWNRLAKELVNKHGVPNLYVILDGDWKLFEKRLFMRNRKVEIDNFTKNQLYFQNLHRVYTGFMEAVCNDFGINYCIIDAKLPIVTIIKMILEKLKLQKLDWKFI</sequence>
<reference key="1">
    <citation type="journal article" date="1995" name="Science">
        <title>The minimal gene complement of Mycoplasma genitalium.</title>
        <authorList>
            <person name="Fraser C.M."/>
            <person name="Gocayne J.D."/>
            <person name="White O."/>
            <person name="Adams M.D."/>
            <person name="Clayton R.A."/>
            <person name="Fleischmann R.D."/>
            <person name="Bult C.J."/>
            <person name="Kerlavage A.R."/>
            <person name="Sutton G.G."/>
            <person name="Kelley J.M."/>
            <person name="Fritchman J.L."/>
            <person name="Weidman J.F."/>
            <person name="Small K.V."/>
            <person name="Sandusky M."/>
            <person name="Fuhrmann J.L."/>
            <person name="Nguyen D.T."/>
            <person name="Utterback T.R."/>
            <person name="Saudek D.M."/>
            <person name="Phillips C.A."/>
            <person name="Merrick J.M."/>
            <person name="Tomb J.-F."/>
            <person name="Dougherty B.A."/>
            <person name="Bott K.F."/>
            <person name="Hu P.-C."/>
            <person name="Lucier T.S."/>
            <person name="Peterson S.N."/>
            <person name="Smith H.O."/>
            <person name="Hutchison C.A. III"/>
            <person name="Venter J.C."/>
        </authorList>
    </citation>
    <scope>NUCLEOTIDE SEQUENCE [LARGE SCALE GENOMIC DNA]</scope>
    <source>
        <strain>ATCC 33530 / DSM 19775 / NCTC 10195 / G37</strain>
    </source>
</reference>
<proteinExistence type="predicted"/>
<gene>
    <name type="ordered locus">MG268</name>
</gene>
<feature type="chain" id="PRO_0000210496" description="Uncharacterized protein MG268">
    <location>
        <begin position="1"/>
        <end position="228"/>
    </location>
</feature>
<feature type="binding site" evidence="1">
    <location>
        <begin position="21"/>
        <end position="28"/>
    </location>
    <ligand>
        <name>ATP</name>
        <dbReference type="ChEBI" id="CHEBI:30616"/>
    </ligand>
</feature>
<evidence type="ECO:0000255" key="1"/>
<organism>
    <name type="scientific">Mycoplasma genitalium (strain ATCC 33530 / DSM 19775 / NCTC 10195 / G37)</name>
    <name type="common">Mycoplasmoides genitalium</name>
    <dbReference type="NCBI Taxonomy" id="243273"/>
    <lineage>
        <taxon>Bacteria</taxon>
        <taxon>Bacillati</taxon>
        <taxon>Mycoplasmatota</taxon>
        <taxon>Mycoplasmoidales</taxon>
        <taxon>Mycoplasmoidaceae</taxon>
        <taxon>Mycoplasmoides</taxon>
    </lineage>
</organism>
<accession>P47510</accession>
<protein>
    <recommendedName>
        <fullName>Uncharacterized protein MG268</fullName>
    </recommendedName>
</protein>